<reference key="1">
    <citation type="journal article" date="2004" name="Proc. Natl. Acad. Sci. U.S.A.">
        <title>Genome sequence of the deep-sea gamma-proteobacterium Idiomarina loihiensis reveals amino acid fermentation as a source of carbon and energy.</title>
        <authorList>
            <person name="Hou S."/>
            <person name="Saw J.H."/>
            <person name="Lee K.S."/>
            <person name="Freitas T.A."/>
            <person name="Belisle C."/>
            <person name="Kawarabayasi Y."/>
            <person name="Donachie S.P."/>
            <person name="Pikina A."/>
            <person name="Galperin M.Y."/>
            <person name="Koonin E.V."/>
            <person name="Makarova K.S."/>
            <person name="Omelchenko M.V."/>
            <person name="Sorokin A."/>
            <person name="Wolf Y.I."/>
            <person name="Li Q.X."/>
            <person name="Keum Y.S."/>
            <person name="Campbell S."/>
            <person name="Denery J."/>
            <person name="Aizawa S."/>
            <person name="Shibata S."/>
            <person name="Malahoff A."/>
            <person name="Alam M."/>
        </authorList>
    </citation>
    <scope>NUCLEOTIDE SEQUENCE [LARGE SCALE GENOMIC DNA]</scope>
    <source>
        <strain>ATCC BAA-735 / DSM 15497 / L2-TR</strain>
    </source>
</reference>
<dbReference type="EC" id="2.7.1.33" evidence="1"/>
<dbReference type="EMBL" id="AE017340">
    <property type="protein sequence ID" value="AAV82834.1"/>
    <property type="molecule type" value="Genomic_DNA"/>
</dbReference>
<dbReference type="RefSeq" id="WP_011235230.1">
    <property type="nucleotide sequence ID" value="NC_006512.1"/>
</dbReference>
<dbReference type="SMR" id="Q5QY78"/>
<dbReference type="STRING" id="283942.IL2002"/>
<dbReference type="GeneID" id="41337192"/>
<dbReference type="KEGG" id="ilo:IL2002"/>
<dbReference type="eggNOG" id="COG1521">
    <property type="taxonomic scope" value="Bacteria"/>
</dbReference>
<dbReference type="HOGENOM" id="CLU_066627_0_0_6"/>
<dbReference type="OrthoDB" id="9781305at2"/>
<dbReference type="UniPathway" id="UPA00241">
    <property type="reaction ID" value="UER00352"/>
</dbReference>
<dbReference type="Proteomes" id="UP000001171">
    <property type="component" value="Chromosome"/>
</dbReference>
<dbReference type="GO" id="GO:0005737">
    <property type="term" value="C:cytoplasm"/>
    <property type="evidence" value="ECO:0007669"/>
    <property type="project" value="UniProtKB-SubCell"/>
</dbReference>
<dbReference type="GO" id="GO:0005524">
    <property type="term" value="F:ATP binding"/>
    <property type="evidence" value="ECO:0007669"/>
    <property type="project" value="UniProtKB-UniRule"/>
</dbReference>
<dbReference type="GO" id="GO:0046872">
    <property type="term" value="F:metal ion binding"/>
    <property type="evidence" value="ECO:0007669"/>
    <property type="project" value="UniProtKB-KW"/>
</dbReference>
<dbReference type="GO" id="GO:0004594">
    <property type="term" value="F:pantothenate kinase activity"/>
    <property type="evidence" value="ECO:0007669"/>
    <property type="project" value="UniProtKB-UniRule"/>
</dbReference>
<dbReference type="GO" id="GO:0015937">
    <property type="term" value="P:coenzyme A biosynthetic process"/>
    <property type="evidence" value="ECO:0007669"/>
    <property type="project" value="UniProtKB-UniRule"/>
</dbReference>
<dbReference type="CDD" id="cd24015">
    <property type="entry name" value="ASKHA_NBD_PanK-III"/>
    <property type="match status" value="1"/>
</dbReference>
<dbReference type="Gene3D" id="3.30.420.40">
    <property type="match status" value="2"/>
</dbReference>
<dbReference type="HAMAP" id="MF_01274">
    <property type="entry name" value="Pantothen_kinase_3"/>
    <property type="match status" value="1"/>
</dbReference>
<dbReference type="InterPro" id="IPR043129">
    <property type="entry name" value="ATPase_NBD"/>
</dbReference>
<dbReference type="InterPro" id="IPR004619">
    <property type="entry name" value="Type_III_PanK"/>
</dbReference>
<dbReference type="NCBIfam" id="TIGR00671">
    <property type="entry name" value="baf"/>
    <property type="match status" value="1"/>
</dbReference>
<dbReference type="PANTHER" id="PTHR34265">
    <property type="entry name" value="TYPE III PANTOTHENATE KINASE"/>
    <property type="match status" value="1"/>
</dbReference>
<dbReference type="PANTHER" id="PTHR34265:SF1">
    <property type="entry name" value="TYPE III PANTOTHENATE KINASE"/>
    <property type="match status" value="1"/>
</dbReference>
<dbReference type="Pfam" id="PF03309">
    <property type="entry name" value="Pan_kinase"/>
    <property type="match status" value="1"/>
</dbReference>
<dbReference type="SUPFAM" id="SSF53067">
    <property type="entry name" value="Actin-like ATPase domain"/>
    <property type="match status" value="2"/>
</dbReference>
<proteinExistence type="inferred from homology"/>
<name>COAX_IDILO</name>
<feature type="chain" id="PRO_0000270877" description="Type III pantothenate kinase">
    <location>
        <begin position="1"/>
        <end position="262"/>
    </location>
</feature>
<feature type="active site" description="Proton acceptor" evidence="1">
    <location>
        <position position="112"/>
    </location>
</feature>
<feature type="binding site" evidence="1">
    <location>
        <begin position="5"/>
        <end position="12"/>
    </location>
    <ligand>
        <name>ATP</name>
        <dbReference type="ChEBI" id="CHEBI:30616"/>
    </ligand>
</feature>
<feature type="binding site" evidence="1">
    <location>
        <position position="102"/>
    </location>
    <ligand>
        <name>substrate</name>
    </ligand>
</feature>
<feature type="binding site" evidence="1">
    <location>
        <begin position="110"/>
        <end position="113"/>
    </location>
    <ligand>
        <name>substrate</name>
    </ligand>
</feature>
<feature type="binding site" evidence="1">
    <location>
        <position position="132"/>
    </location>
    <ligand>
        <name>K(+)</name>
        <dbReference type="ChEBI" id="CHEBI:29103"/>
    </ligand>
</feature>
<feature type="binding site" evidence="1">
    <location>
        <position position="135"/>
    </location>
    <ligand>
        <name>ATP</name>
        <dbReference type="ChEBI" id="CHEBI:30616"/>
    </ligand>
</feature>
<feature type="binding site" evidence="1">
    <location>
        <position position="190"/>
    </location>
    <ligand>
        <name>substrate</name>
    </ligand>
</feature>
<gene>
    <name evidence="1" type="primary">coaX</name>
    <name type="ordered locus">IL2002</name>
</gene>
<sequence length="262" mass="28556">MLLIDAGNTRSKFAWWDADTDKIEILGAIPHQSWLNDLSQPLKDLLLEVVSSRQLEREQQAIGCSVAAVQVMDTLNSSLAELGIKVFWQKTRAQQAGVTNGYTKEPERLGSDRWMALLGCHEQVKQNALIVDAGTALTIDWLMADGRHLGGWIVPGRQLMLNALGQGTANLKGITVNDIERDGLAAGLDTFDGITQGAEAALTGAIAQAIQLSGRYFSDQPFDVVVTGGDGEHLMRTLSVEFCRYDDLLFKGLRLCADNLNS</sequence>
<protein>
    <recommendedName>
        <fullName evidence="1">Type III pantothenate kinase</fullName>
        <ecNumber evidence="1">2.7.1.33</ecNumber>
    </recommendedName>
    <alternativeName>
        <fullName evidence="1">PanK-III</fullName>
    </alternativeName>
    <alternativeName>
        <fullName evidence="1">Pantothenic acid kinase</fullName>
    </alternativeName>
</protein>
<accession>Q5QY78</accession>
<keyword id="KW-0067">ATP-binding</keyword>
<keyword id="KW-0173">Coenzyme A biosynthesis</keyword>
<keyword id="KW-0963">Cytoplasm</keyword>
<keyword id="KW-0418">Kinase</keyword>
<keyword id="KW-0479">Metal-binding</keyword>
<keyword id="KW-0547">Nucleotide-binding</keyword>
<keyword id="KW-0630">Potassium</keyword>
<keyword id="KW-1185">Reference proteome</keyword>
<keyword id="KW-0808">Transferase</keyword>
<organism>
    <name type="scientific">Idiomarina loihiensis (strain ATCC BAA-735 / DSM 15497 / L2-TR)</name>
    <dbReference type="NCBI Taxonomy" id="283942"/>
    <lineage>
        <taxon>Bacteria</taxon>
        <taxon>Pseudomonadati</taxon>
        <taxon>Pseudomonadota</taxon>
        <taxon>Gammaproteobacteria</taxon>
        <taxon>Alteromonadales</taxon>
        <taxon>Idiomarinaceae</taxon>
        <taxon>Idiomarina</taxon>
    </lineage>
</organism>
<comment type="function">
    <text evidence="1">Catalyzes the phosphorylation of pantothenate (Pan), the first step in CoA biosynthesis.</text>
</comment>
<comment type="catalytic activity">
    <reaction evidence="1">
        <text>(R)-pantothenate + ATP = (R)-4'-phosphopantothenate + ADP + H(+)</text>
        <dbReference type="Rhea" id="RHEA:16373"/>
        <dbReference type="ChEBI" id="CHEBI:10986"/>
        <dbReference type="ChEBI" id="CHEBI:15378"/>
        <dbReference type="ChEBI" id="CHEBI:29032"/>
        <dbReference type="ChEBI" id="CHEBI:30616"/>
        <dbReference type="ChEBI" id="CHEBI:456216"/>
        <dbReference type="EC" id="2.7.1.33"/>
    </reaction>
</comment>
<comment type="cofactor">
    <cofactor evidence="1">
        <name>NH4(+)</name>
        <dbReference type="ChEBI" id="CHEBI:28938"/>
    </cofactor>
    <cofactor evidence="1">
        <name>K(+)</name>
        <dbReference type="ChEBI" id="CHEBI:29103"/>
    </cofactor>
    <text evidence="1">A monovalent cation. Ammonium or potassium.</text>
</comment>
<comment type="pathway">
    <text evidence="1">Cofactor biosynthesis; coenzyme A biosynthesis; CoA from (R)-pantothenate: step 1/5.</text>
</comment>
<comment type="subunit">
    <text evidence="1">Homodimer.</text>
</comment>
<comment type="subcellular location">
    <subcellularLocation>
        <location evidence="1">Cytoplasm</location>
    </subcellularLocation>
</comment>
<comment type="similarity">
    <text evidence="1">Belongs to the type III pantothenate kinase family.</text>
</comment>
<evidence type="ECO:0000255" key="1">
    <source>
        <dbReference type="HAMAP-Rule" id="MF_01274"/>
    </source>
</evidence>